<gene>
    <name evidence="2" type="primary">Washc2</name>
    <name type="synonym">FAM21</name>
</gene>
<accession>Q5RDC1</accession>
<dbReference type="EMBL" id="CR857993">
    <property type="protein sequence ID" value="CAH90236.1"/>
    <property type="molecule type" value="mRNA"/>
</dbReference>
<dbReference type="RefSeq" id="NP_001125099.1">
    <property type="nucleotide sequence ID" value="NM_001131627.2"/>
</dbReference>
<dbReference type="SMR" id="Q5RDC1"/>
<dbReference type="FunCoup" id="Q5RDC1">
    <property type="interactions" value="2334"/>
</dbReference>
<dbReference type="STRING" id="9601.ENSPPYP00000002605"/>
<dbReference type="GeneID" id="100171981"/>
<dbReference type="KEGG" id="pon:100171981"/>
<dbReference type="CTD" id="28006"/>
<dbReference type="eggNOG" id="ENOG502QTIY">
    <property type="taxonomic scope" value="Eukaryota"/>
</dbReference>
<dbReference type="InParanoid" id="Q5RDC1"/>
<dbReference type="OrthoDB" id="751084at2759"/>
<dbReference type="Proteomes" id="UP000001595">
    <property type="component" value="Unplaced"/>
</dbReference>
<dbReference type="GO" id="GO:0005829">
    <property type="term" value="C:cytosol"/>
    <property type="evidence" value="ECO:0007669"/>
    <property type="project" value="GOC"/>
</dbReference>
<dbReference type="GO" id="GO:0005769">
    <property type="term" value="C:early endosome"/>
    <property type="evidence" value="ECO:0000250"/>
    <property type="project" value="UniProtKB"/>
</dbReference>
<dbReference type="GO" id="GO:0031901">
    <property type="term" value="C:early endosome membrane"/>
    <property type="evidence" value="ECO:0007669"/>
    <property type="project" value="UniProtKB-SubCell"/>
</dbReference>
<dbReference type="GO" id="GO:0005886">
    <property type="term" value="C:plasma membrane"/>
    <property type="evidence" value="ECO:0007669"/>
    <property type="project" value="UniProtKB-SubCell"/>
</dbReference>
<dbReference type="GO" id="GO:0071203">
    <property type="term" value="C:WASH complex"/>
    <property type="evidence" value="ECO:0000250"/>
    <property type="project" value="UniProtKB"/>
</dbReference>
<dbReference type="GO" id="GO:1901981">
    <property type="term" value="F:phosphatidylinositol phosphate binding"/>
    <property type="evidence" value="ECO:0007669"/>
    <property type="project" value="TreeGrafter"/>
</dbReference>
<dbReference type="GO" id="GO:1905394">
    <property type="term" value="F:retromer complex binding"/>
    <property type="evidence" value="ECO:0007669"/>
    <property type="project" value="TreeGrafter"/>
</dbReference>
<dbReference type="GO" id="GO:0036010">
    <property type="term" value="P:protein localization to endosome"/>
    <property type="evidence" value="ECO:0000250"/>
    <property type="project" value="UniProtKB"/>
</dbReference>
<dbReference type="GO" id="GO:0042147">
    <property type="term" value="P:retrograde transport, endosome to Golgi"/>
    <property type="evidence" value="ECO:0000250"/>
    <property type="project" value="UniProtKB"/>
</dbReference>
<dbReference type="InterPro" id="IPR029341">
    <property type="entry name" value="FAM21/CAPZIP"/>
</dbReference>
<dbReference type="PANTHER" id="PTHR21669">
    <property type="entry name" value="CAPZ-INTERACTING PROTEIN AND RELATED PROTEINS"/>
    <property type="match status" value="1"/>
</dbReference>
<dbReference type="PANTHER" id="PTHR21669:SF38">
    <property type="entry name" value="WASH COMPLEX SUBUNIT 2A-RELATED"/>
    <property type="match status" value="1"/>
</dbReference>
<dbReference type="Pfam" id="PF15255">
    <property type="entry name" value="CAP-ZIP_m"/>
    <property type="match status" value="1"/>
</dbReference>
<protein>
    <recommendedName>
        <fullName evidence="2">WASH complex subunit 2</fullName>
    </recommendedName>
</protein>
<name>WASC2_PONAB</name>
<evidence type="ECO:0000250" key="1">
    <source>
        <dbReference type="UniProtKB" id="Q641Q2"/>
    </source>
</evidence>
<evidence type="ECO:0000250" key="2">
    <source>
        <dbReference type="UniProtKB" id="Q6PGL7"/>
    </source>
</evidence>
<evidence type="ECO:0000250" key="3">
    <source>
        <dbReference type="UniProtKB" id="Q80X08"/>
    </source>
</evidence>
<evidence type="ECO:0000250" key="4">
    <source>
        <dbReference type="UniProtKB" id="Q9Y4E1"/>
    </source>
</evidence>
<evidence type="ECO:0000256" key="5">
    <source>
        <dbReference type="SAM" id="MobiDB-lite"/>
    </source>
</evidence>
<evidence type="ECO:0000305" key="6"/>
<feature type="chain" id="PRO_0000186715" description="WASH complex subunit 2">
    <location>
        <begin position="1"/>
        <end position="1340"/>
    </location>
</feature>
<feature type="region of interest" description="Sufficient for interaction with WASHC3, WASHC4 and WASHC5; required for interaction with WASHC1" evidence="4">
    <location>
        <begin position="1"/>
        <end position="219"/>
    </location>
</feature>
<feature type="region of interest" description="Disordered" evidence="5">
    <location>
        <begin position="201"/>
        <end position="404"/>
    </location>
</feature>
<feature type="region of interest" description="Sufficient for interaction with CCDC93" evidence="4">
    <location>
        <begin position="355"/>
        <end position="599"/>
    </location>
</feature>
<feature type="region of interest" description="Interaction with VPS35" evidence="4">
    <location>
        <begin position="356"/>
        <end position="1340"/>
    </location>
</feature>
<feature type="region of interest" description="Disordered" evidence="5">
    <location>
        <begin position="421"/>
        <end position="586"/>
    </location>
</feature>
<feature type="region of interest" description="Disordered" evidence="5">
    <location>
        <begin position="618"/>
        <end position="663"/>
    </location>
</feature>
<feature type="region of interest" description="Disordered" evidence="5">
    <location>
        <begin position="695"/>
        <end position="838"/>
    </location>
</feature>
<feature type="region of interest" description="Disordered" evidence="5">
    <location>
        <begin position="906"/>
        <end position="950"/>
    </location>
</feature>
<feature type="region of interest" description="Interaction with phospholipids" evidence="4">
    <location>
        <begin position="936"/>
        <end position="1340"/>
    </location>
</feature>
<feature type="region of interest" description="Disordered" evidence="5">
    <location>
        <begin position="987"/>
        <end position="1205"/>
    </location>
</feature>
<feature type="region of interest" description="Required for interaction with F-actin-capping protein subunit alpha (CAPZA1 or CAPZA2 or CAPZA3)" evidence="4">
    <location>
        <begin position="1028"/>
        <end position="1046"/>
    </location>
</feature>
<feature type="region of interest" description="Disordered" evidence="5">
    <location>
        <begin position="1301"/>
        <end position="1325"/>
    </location>
</feature>
<feature type="short sequence motif" description="LFa 1" evidence="4">
    <location>
        <begin position="366"/>
        <end position="377"/>
    </location>
</feature>
<feature type="short sequence motif" description="LFa 2" evidence="4">
    <location>
        <begin position="410"/>
        <end position="418"/>
    </location>
</feature>
<feature type="short sequence motif" description="LFa 3" evidence="4">
    <location>
        <begin position="449"/>
        <end position="462"/>
    </location>
</feature>
<feature type="short sequence motif" description="LFa 4" evidence="4">
    <location>
        <begin position="481"/>
        <end position="490"/>
    </location>
</feature>
<feature type="short sequence motif" description="LFa 5" evidence="4">
    <location>
        <begin position="536"/>
        <end position="547"/>
    </location>
</feature>
<feature type="short sequence motif" description="LFa 6" evidence="4">
    <location>
        <begin position="571"/>
        <end position="582"/>
    </location>
</feature>
<feature type="short sequence motif" description="LFa 7" evidence="4">
    <location>
        <begin position="616"/>
        <end position="628"/>
    </location>
</feature>
<feature type="short sequence motif" description="LFa 8" evidence="4">
    <location>
        <begin position="663"/>
        <end position="673"/>
    </location>
</feature>
<feature type="short sequence motif" description="LFa 9" evidence="4">
    <location>
        <begin position="689"/>
        <end position="701"/>
    </location>
</feature>
<feature type="short sequence motif" description="LFa 10" evidence="4">
    <location>
        <begin position="725"/>
        <end position="737"/>
    </location>
</feature>
<feature type="short sequence motif" description="LFa 11" evidence="4">
    <location>
        <begin position="802"/>
        <end position="816"/>
    </location>
</feature>
<feature type="short sequence motif" description="LFa 12" evidence="4">
    <location>
        <begin position="838"/>
        <end position="846"/>
    </location>
</feature>
<feature type="short sequence motif" description="LFa 13" evidence="4">
    <location>
        <begin position="855"/>
        <end position="861"/>
    </location>
</feature>
<feature type="short sequence motif" description="LFa 14" evidence="4">
    <location>
        <begin position="877"/>
        <end position="887"/>
    </location>
</feature>
<feature type="short sequence motif" description="LFa 15" evidence="4">
    <location>
        <begin position="1128"/>
        <end position="1135"/>
    </location>
</feature>
<feature type="short sequence motif" description="LFa 16" evidence="4">
    <location>
        <begin position="1170"/>
        <end position="1184"/>
    </location>
</feature>
<feature type="short sequence motif" description="LFa 17" evidence="4">
    <location>
        <begin position="1200"/>
        <end position="1208"/>
    </location>
</feature>
<feature type="short sequence motif" description="LFa 18" evidence="4">
    <location>
        <begin position="1233"/>
        <end position="1239"/>
    </location>
</feature>
<feature type="short sequence motif" description="LFa 19" evidence="4">
    <location>
        <begin position="1261"/>
        <end position="1269"/>
    </location>
</feature>
<feature type="short sequence motif" description="LFa 20" evidence="4">
    <location>
        <begin position="1289"/>
        <end position="1298"/>
    </location>
</feature>
<feature type="short sequence motif" description="LFa 21" evidence="4">
    <location>
        <begin position="1329"/>
        <end position="1337"/>
    </location>
</feature>
<feature type="compositionally biased region" description="Low complexity" evidence="5">
    <location>
        <begin position="201"/>
        <end position="213"/>
    </location>
</feature>
<feature type="compositionally biased region" description="Acidic residues" evidence="5">
    <location>
        <begin position="219"/>
        <end position="231"/>
    </location>
</feature>
<feature type="compositionally biased region" description="Basic and acidic residues" evidence="5">
    <location>
        <begin position="232"/>
        <end position="241"/>
    </location>
</feature>
<feature type="compositionally biased region" description="Acidic residues" evidence="5">
    <location>
        <begin position="249"/>
        <end position="258"/>
    </location>
</feature>
<feature type="compositionally biased region" description="Acidic residues" evidence="5">
    <location>
        <begin position="265"/>
        <end position="275"/>
    </location>
</feature>
<feature type="compositionally biased region" description="Basic and acidic residues" evidence="5">
    <location>
        <begin position="292"/>
        <end position="306"/>
    </location>
</feature>
<feature type="compositionally biased region" description="Gly residues" evidence="5">
    <location>
        <begin position="354"/>
        <end position="365"/>
    </location>
</feature>
<feature type="compositionally biased region" description="Acidic residues" evidence="5">
    <location>
        <begin position="450"/>
        <end position="461"/>
    </location>
</feature>
<feature type="compositionally biased region" description="Basic and acidic residues" evidence="5">
    <location>
        <begin position="506"/>
        <end position="516"/>
    </location>
</feature>
<feature type="compositionally biased region" description="Low complexity" evidence="5">
    <location>
        <begin position="517"/>
        <end position="527"/>
    </location>
</feature>
<feature type="compositionally biased region" description="Low complexity" evidence="5">
    <location>
        <begin position="546"/>
        <end position="566"/>
    </location>
</feature>
<feature type="compositionally biased region" description="Basic and acidic residues" evidence="5">
    <location>
        <begin position="636"/>
        <end position="646"/>
    </location>
</feature>
<feature type="compositionally biased region" description="Basic and acidic residues" evidence="5">
    <location>
        <begin position="740"/>
        <end position="767"/>
    </location>
</feature>
<feature type="compositionally biased region" description="Basic and acidic residues" evidence="5">
    <location>
        <begin position="822"/>
        <end position="833"/>
    </location>
</feature>
<feature type="compositionally biased region" description="Basic and acidic residues" evidence="5">
    <location>
        <begin position="916"/>
        <end position="930"/>
    </location>
</feature>
<feature type="compositionally biased region" description="Basic residues" evidence="5">
    <location>
        <begin position="1027"/>
        <end position="1045"/>
    </location>
</feature>
<feature type="compositionally biased region" description="Low complexity" evidence="5">
    <location>
        <begin position="1093"/>
        <end position="1109"/>
    </location>
</feature>
<feature type="modified residue" description="Phosphoserine" evidence="2">
    <location>
        <position position="157"/>
    </location>
</feature>
<feature type="modified residue" description="Phosphoserine" evidence="2">
    <location>
        <position position="159"/>
    </location>
</feature>
<feature type="modified residue" description="Phosphoserine" evidence="3">
    <location>
        <position position="204"/>
    </location>
</feature>
<feature type="modified residue" description="Phosphoserine" evidence="3">
    <location>
        <position position="205"/>
    </location>
</feature>
<feature type="modified residue" description="Phosphoserine" evidence="3">
    <location>
        <position position="209"/>
    </location>
</feature>
<feature type="modified residue" description="Phosphoserine" evidence="2">
    <location>
        <position position="287"/>
    </location>
</feature>
<feature type="modified residue" description="Phosphothreonine" evidence="2">
    <location>
        <position position="330"/>
    </location>
</feature>
<feature type="modified residue" description="Phosphoserine" evidence="3">
    <location>
        <position position="394"/>
    </location>
</feature>
<feature type="modified residue" description="Phosphoserine" evidence="2">
    <location>
        <position position="396"/>
    </location>
</feature>
<feature type="modified residue" description="Phosphoserine" evidence="2">
    <location>
        <position position="538"/>
    </location>
</feature>
<feature type="modified residue" description="Phosphoserine" evidence="3">
    <location>
        <position position="543"/>
    </location>
</feature>
<feature type="modified residue" description="Phosphoserine" evidence="2">
    <location>
        <position position="618"/>
    </location>
</feature>
<feature type="modified residue" description="Phosphoserine" evidence="2">
    <location>
        <position position="619"/>
    </location>
</feature>
<feature type="modified residue" description="Phosphoserine" evidence="2">
    <location>
        <position position="727"/>
    </location>
</feature>
<feature type="modified residue" description="Phosphoserine" evidence="2">
    <location>
        <position position="751"/>
    </location>
</feature>
<feature type="modified residue" description="Phosphoserine" evidence="3">
    <location>
        <position position="786"/>
    </location>
</feature>
<feature type="modified residue" description="Phosphoserine" evidence="2">
    <location>
        <position position="801"/>
    </location>
</feature>
<feature type="modified residue" description="Phosphoserine" evidence="2">
    <location>
        <position position="873"/>
    </location>
</feature>
<feature type="modified residue" description="Phosphoserine" evidence="2">
    <location>
        <position position="876"/>
    </location>
</feature>
<feature type="modified residue" description="Phosphoserine" evidence="1">
    <location>
        <position position="1053"/>
    </location>
</feature>
<feature type="modified residue" description="Phosphoserine" evidence="1">
    <location>
        <position position="1086"/>
    </location>
</feature>
<feature type="modified residue" description="Phosphoserine" evidence="1">
    <location>
        <position position="1113"/>
    </location>
</feature>
<feature type="modified residue" description="Phosphoserine" evidence="2">
    <location>
        <position position="1178"/>
    </location>
</feature>
<feature type="modified residue" description="Phosphoserine" evidence="2">
    <location>
        <position position="1179"/>
    </location>
</feature>
<proteinExistence type="evidence at transcript level"/>
<comment type="function">
    <text evidence="4">Acts as a component of the WASH core complex that functions as a nucleation-promoting factor (NPF) at the surface of endosomes, where it recruits and activates the Arp2/3 complex to induce actin polymerization, playing a key role in the fission of tubules that serve as transport intermediates during endosome sorting. Mediates the recruitment of the WASH core complex to endosome membranes via binding to phospholipids and VPS35 of the retromer CSC. Mediates the recruitment of the F-actin-capping protein dimer to the WASH core complex probably promoting localized F-actin polymerization needed for vesicle scission. Via its C-terminus binds various phospholipids, most strongly phosphatidylinositol 4-phosphate (PtdIns-(4)P), phosphatidylinositol 5-phosphate (PtdIns-(5)P) and phosphatidylinositol 3,5-bisphosphate (PtdIns-(3,5)P2). Involved in the endosome-to-plasma membrane trafficking and recycling of SNX27-retromer-dependent cargo proteins, such as GLUT1. Required for the association of DNAJC13, ENTR1, ANKRD50 with retromer CSC subunit VPS35. Required for the endosomal recruitment of CCC and retriever complexes subunits COMMD1 and CCDC93 as well as the retrievere complex subunit VPS35L.</text>
</comment>
<comment type="subunit">
    <text evidence="1 4">Component of the WASH core complex also described as WASH regulatory complex (SHRC) composed of WASHC1, WASHC2, WASHC3, WASHC4 and WASHC5; in the complex interacts (via N-terminus) directly with WASHC1. The WASH core complex associates with the F-actin-capping protein dimer (formed by CAPZA1, CAPZA2 or CAPZA3 and CAPZB) in a transient or substoichiometric manner which was initially described as WASH complex. Interacts with VPS35; mediates the association with the retromer CSC complex. Interacts with FKBP15. Interacts with CCDC93, CCDC22, VPS35L; indicative for an association of the WASH core complex with the CCC and retriever complexes (By similarity). Directly interacts with TBC1D23 (By similarity).</text>
</comment>
<comment type="subcellular location">
    <subcellularLocation>
        <location evidence="4">Early endosome membrane</location>
    </subcellularLocation>
    <subcellularLocation>
        <location evidence="4">Cell membrane</location>
    </subcellularLocation>
</comment>
<comment type="domain">
    <text evidence="4">The LFa (leucine-phenylalanine-acidic) motif bind directly to VPS35 of retromer CSC; adjacent motifs can act cooperatively to bind multiple CSCs, although there is significant variability in the affinities of different motifs for retromer.</text>
</comment>
<comment type="similarity">
    <text evidence="6">Belongs to the FAM21 family.</text>
</comment>
<reference key="1">
    <citation type="submission" date="2004-11" db="EMBL/GenBank/DDBJ databases">
        <authorList>
            <consortium name="The German cDNA consortium"/>
        </authorList>
    </citation>
    <scope>NUCLEOTIDE SEQUENCE [LARGE SCALE MRNA]</scope>
    <source>
        <tissue>Kidney</tissue>
    </source>
</reference>
<sequence length="1340" mass="146813">MNRTTPDQELAPASEPVWERPWSVEEIRRSSQSWSLAADAGLLQFLQEFSQQTISRTHEIKKQVDGLIRETKATDCRLHNVFNDFLMLSNTQFIENRVYDEEVEEPVLKAEAEKTEQEKTREQKEVDLIPKVQEAVNYGLQVLDSAFEQLDIKAGNSDSEEDDANGRVELILEPKDLYIDRPLPYLIGSKLFMEQEDVGLGELSSEEGSVGSDRGSIVDTEEEKEEEESDEDFAHHSDNDQNRNTTQMSDEEEDDDGCDLFADSEKEEEDIEDIEEITRPKRNGPTSFADELAARIKGDAVGRVDEEPTTLSSGEAKPRKTLKEKKERRTPSDDEEDNLFAPPKLTDEDFSPFGSGGGLFSGGKGLFDDEDEESDLFTEAPQDRQAGASVKEESSSSKPGKKIPAGAVSVFLGDTDVFGAASVPSLKEPQKPEQPTPRKSPYFPPPTGLFDDDDGDDDDDFFSTPHSKPSKTGKVQSTADIFGDDEGDLFKEKAVTLPEATVSQTDENKARAEKKVSLPSSKNLKPSSETKTQKGLFSDEEDSEDLFSSQSASKLKGAPLLPGKLPTSVSLFEDEDEEDNLFGGTAAKRQTLSLQAQGEEKAKASELSKKKASALLFSSDEEDQWNIPASQTHSASDSRSKGESRDSGTLQSQEAKAVKKASLFEEDEEDDLFAIAKDSQKKTQRVSLLFEDDVDSGGSLFGSPPTSVPPATTKKETVSEAPPLLFSDEEEKEAQLGVKPVDKKVESAKESLKFGRTDVAESEKEGLLTRSAQEAVKHSDLFSSSSPLDKGTKPRTKTVLSLFDEEEDKMEDQNTIQAPQKEVGKGRDPDARPKSTGVFQDEELLFSHKLQKDNDPDVDLFAGTKKTKLLEPSVGSLFGDDEDDDLFSSAKSQPLVQEKKRVVKKDYSVDSVKNQKHPETIQGIKEKGIWKPETPQDSSGLAPFKTKEPSTRIGKIQANLAINPAALLPTAASQISEVKPVLPELAFPSSEHRRSHGLESVPVLPGSGEAGVSFDLPAQADTLHSANKSRVKMRGKRRPQTRAARRLAAQESSEAEDMSVPRGPIAQWADGTISPNGHRPQLRAASGEDSTEEALAAAAAPWEGGPVPGVDRSPFAKSLGHSRGEADLFDSGDIFSTGTGSQSEERTKPKAKIAENLANPPVGGKAKSPMFPALGEASSDDDLFQSAKPKPAKKTNPFPLLEDEDDLFTDQKVKKNETKSDSQQDVISTTQDIFEDDIFATEAIKPSQKTREKEKTLESNLFDDNIDIFADLTVKPKEKSKKKVEAKSIFDDDMDDIFSSGIQAKTAKPKSRSAQAAPEPRFEHKVSNIFDDPLNAFGGQ</sequence>
<keyword id="KW-1003">Cell membrane</keyword>
<keyword id="KW-0967">Endosome</keyword>
<keyword id="KW-0472">Membrane</keyword>
<keyword id="KW-0597">Phosphoprotein</keyword>
<keyword id="KW-1185">Reference proteome</keyword>
<keyword id="KW-0813">Transport</keyword>
<organism>
    <name type="scientific">Pongo abelii</name>
    <name type="common">Sumatran orangutan</name>
    <name type="synonym">Pongo pygmaeus abelii</name>
    <dbReference type="NCBI Taxonomy" id="9601"/>
    <lineage>
        <taxon>Eukaryota</taxon>
        <taxon>Metazoa</taxon>
        <taxon>Chordata</taxon>
        <taxon>Craniata</taxon>
        <taxon>Vertebrata</taxon>
        <taxon>Euteleostomi</taxon>
        <taxon>Mammalia</taxon>
        <taxon>Eutheria</taxon>
        <taxon>Euarchontoglires</taxon>
        <taxon>Primates</taxon>
        <taxon>Haplorrhini</taxon>
        <taxon>Catarrhini</taxon>
        <taxon>Hominidae</taxon>
        <taxon>Pongo</taxon>
    </lineage>
</organism>